<gene>
    <name evidence="1" type="primary">rplR</name>
    <name type="ordered locus">SH0818</name>
</gene>
<comment type="function">
    <text evidence="1">This is one of the proteins that bind and probably mediate the attachment of the 5S RNA into the large ribosomal subunit, where it forms part of the central protuberance.</text>
</comment>
<comment type="subunit">
    <text evidence="1">Part of the 50S ribosomal subunit; part of the 5S rRNA/L5/L18/L25 subcomplex. Contacts the 5S and 23S rRNAs.</text>
</comment>
<comment type="similarity">
    <text evidence="1">Belongs to the universal ribosomal protein uL18 family.</text>
</comment>
<sequence length="120" mass="13316">MISKIDKNKVRLKRHARVRTKLSGTAEKPRLNVYRSNKHIYAQIIDDVKGETLVQASSKDKDIASDSTSKVDLSTKVGEAIAKKASDKGIKEIVFDRGGYLYHGRVKALAEAARESGLEF</sequence>
<keyword id="KW-0687">Ribonucleoprotein</keyword>
<keyword id="KW-0689">Ribosomal protein</keyword>
<keyword id="KW-0694">RNA-binding</keyword>
<keyword id="KW-0699">rRNA-binding</keyword>
<name>RL18_STAHJ</name>
<dbReference type="EMBL" id="AP006716">
    <property type="protein sequence ID" value="BAE04127.1"/>
    <property type="molecule type" value="Genomic_DNA"/>
</dbReference>
<dbReference type="RefSeq" id="WP_011275136.1">
    <property type="nucleotide sequence ID" value="NC_007168.1"/>
</dbReference>
<dbReference type="SMR" id="Q4L898"/>
<dbReference type="KEGG" id="sha:SH0818"/>
<dbReference type="eggNOG" id="COG0256">
    <property type="taxonomic scope" value="Bacteria"/>
</dbReference>
<dbReference type="HOGENOM" id="CLU_098841_0_1_9"/>
<dbReference type="OrthoDB" id="9810939at2"/>
<dbReference type="Proteomes" id="UP000000543">
    <property type="component" value="Chromosome"/>
</dbReference>
<dbReference type="GO" id="GO:0022625">
    <property type="term" value="C:cytosolic large ribosomal subunit"/>
    <property type="evidence" value="ECO:0007669"/>
    <property type="project" value="TreeGrafter"/>
</dbReference>
<dbReference type="GO" id="GO:0008097">
    <property type="term" value="F:5S rRNA binding"/>
    <property type="evidence" value="ECO:0007669"/>
    <property type="project" value="TreeGrafter"/>
</dbReference>
<dbReference type="GO" id="GO:0003735">
    <property type="term" value="F:structural constituent of ribosome"/>
    <property type="evidence" value="ECO:0007669"/>
    <property type="project" value="InterPro"/>
</dbReference>
<dbReference type="GO" id="GO:0006412">
    <property type="term" value="P:translation"/>
    <property type="evidence" value="ECO:0007669"/>
    <property type="project" value="UniProtKB-UniRule"/>
</dbReference>
<dbReference type="CDD" id="cd00432">
    <property type="entry name" value="Ribosomal_L18_L5e"/>
    <property type="match status" value="1"/>
</dbReference>
<dbReference type="FunFam" id="3.30.420.100:FF:000001">
    <property type="entry name" value="50S ribosomal protein L18"/>
    <property type="match status" value="1"/>
</dbReference>
<dbReference type="Gene3D" id="3.30.420.100">
    <property type="match status" value="1"/>
</dbReference>
<dbReference type="HAMAP" id="MF_01337_B">
    <property type="entry name" value="Ribosomal_uL18_B"/>
    <property type="match status" value="1"/>
</dbReference>
<dbReference type="InterPro" id="IPR004389">
    <property type="entry name" value="Ribosomal_uL18_bac-type"/>
</dbReference>
<dbReference type="InterPro" id="IPR005484">
    <property type="entry name" value="Ribosomal_uL18_bac/euk"/>
</dbReference>
<dbReference type="NCBIfam" id="TIGR00060">
    <property type="entry name" value="L18_bact"/>
    <property type="match status" value="1"/>
</dbReference>
<dbReference type="PANTHER" id="PTHR12899">
    <property type="entry name" value="39S RIBOSOMAL PROTEIN L18, MITOCHONDRIAL"/>
    <property type="match status" value="1"/>
</dbReference>
<dbReference type="PANTHER" id="PTHR12899:SF3">
    <property type="entry name" value="LARGE RIBOSOMAL SUBUNIT PROTEIN UL18M"/>
    <property type="match status" value="1"/>
</dbReference>
<dbReference type="Pfam" id="PF00861">
    <property type="entry name" value="Ribosomal_L18p"/>
    <property type="match status" value="1"/>
</dbReference>
<dbReference type="SUPFAM" id="SSF53137">
    <property type="entry name" value="Translational machinery components"/>
    <property type="match status" value="1"/>
</dbReference>
<feature type="chain" id="PRO_0000131350" description="Large ribosomal subunit protein uL18">
    <location>
        <begin position="1"/>
        <end position="120"/>
    </location>
</feature>
<evidence type="ECO:0000255" key="1">
    <source>
        <dbReference type="HAMAP-Rule" id="MF_01337"/>
    </source>
</evidence>
<evidence type="ECO:0000305" key="2"/>
<protein>
    <recommendedName>
        <fullName evidence="1">Large ribosomal subunit protein uL18</fullName>
    </recommendedName>
    <alternativeName>
        <fullName evidence="2">50S ribosomal protein L18</fullName>
    </alternativeName>
</protein>
<proteinExistence type="inferred from homology"/>
<reference key="1">
    <citation type="journal article" date="2005" name="J. Bacteriol.">
        <title>Whole-genome sequencing of Staphylococcus haemolyticus uncovers the extreme plasticity of its genome and the evolution of human-colonizing staphylococcal species.</title>
        <authorList>
            <person name="Takeuchi F."/>
            <person name="Watanabe S."/>
            <person name="Baba T."/>
            <person name="Yuzawa H."/>
            <person name="Ito T."/>
            <person name="Morimoto Y."/>
            <person name="Kuroda M."/>
            <person name="Cui L."/>
            <person name="Takahashi M."/>
            <person name="Ankai A."/>
            <person name="Baba S."/>
            <person name="Fukui S."/>
            <person name="Lee J.C."/>
            <person name="Hiramatsu K."/>
        </authorList>
    </citation>
    <scope>NUCLEOTIDE SEQUENCE [LARGE SCALE GENOMIC DNA]</scope>
    <source>
        <strain>JCSC1435</strain>
    </source>
</reference>
<organism>
    <name type="scientific">Staphylococcus haemolyticus (strain JCSC1435)</name>
    <dbReference type="NCBI Taxonomy" id="279808"/>
    <lineage>
        <taxon>Bacteria</taxon>
        <taxon>Bacillati</taxon>
        <taxon>Bacillota</taxon>
        <taxon>Bacilli</taxon>
        <taxon>Bacillales</taxon>
        <taxon>Staphylococcaceae</taxon>
        <taxon>Staphylococcus</taxon>
    </lineage>
</organism>
<accession>Q4L898</accession>